<feature type="chain" id="PRO_0000198394" description="L-arabinose isomerase">
    <location>
        <begin position="1"/>
        <end position="496"/>
    </location>
</feature>
<feature type="binding site" evidence="1">
    <location>
        <position position="302"/>
    </location>
    <ligand>
        <name>Mn(2+)</name>
        <dbReference type="ChEBI" id="CHEBI:29035"/>
    </ligand>
</feature>
<feature type="binding site" evidence="1">
    <location>
        <position position="329"/>
    </location>
    <ligand>
        <name>Mn(2+)</name>
        <dbReference type="ChEBI" id="CHEBI:29035"/>
    </ligand>
</feature>
<feature type="binding site" evidence="1">
    <location>
        <position position="346"/>
    </location>
    <ligand>
        <name>Mn(2+)</name>
        <dbReference type="ChEBI" id="CHEBI:29035"/>
    </ligand>
</feature>
<feature type="binding site" evidence="1">
    <location>
        <position position="445"/>
    </location>
    <ligand>
        <name>Mn(2+)</name>
        <dbReference type="ChEBI" id="CHEBI:29035"/>
    </ligand>
</feature>
<sequence length="496" mass="56658">MIDLKQYEFWFLVGSQYLYGLETLKKVEQQASKIVDSLNDDPIFPSKIVLKPVLKSSSEITEIFEKANADPKCAGVIVWMHTFSPSKMWIRGLSINKKPLLHLHTQYNREIPWDTIDMDYMNLNQSAHGDREHGFIHARMRLPRKVVVGHWEEKEVREKIAKWMRVACAIQDGRMGQIVRFGDNMREVASTEGDKVEAQIKLGWSINTWGVGELAERVKAVPEREVEELLKEYREKYIMPEDEYSLKAIREQAKIEIALREFLKEKNAVGFTTTFEDLHDLPQLPGLAVQRLMEEGYGFGAEGDWKAAGLVRAIKVMGTSLPGGTSFMEDYTYHLTPGNELVLGAHMLEVCPTIAKEKPRIEVHPLSIGGKADPARLVFDGQEGPAVNASIVDMGNRFRLVVNKVLSVPIERKMPKLPTARVLWKPLPDFKRATTAWILAGGSHHTAFSTAIDVEYLIDWAEALEIEYVVIDENLDLEDFKKELRWNELYWGLLKR</sequence>
<dbReference type="EC" id="5.3.1.4" evidence="1"/>
<dbReference type="EMBL" id="AE000512">
    <property type="protein sequence ID" value="AAD35365.1"/>
    <property type="molecule type" value="Genomic_DNA"/>
</dbReference>
<dbReference type="PIR" id="B72398">
    <property type="entry name" value="B72398"/>
</dbReference>
<dbReference type="RefSeq" id="NP_228089.1">
    <property type="nucleotide sequence ID" value="NC_000853.1"/>
</dbReference>
<dbReference type="RefSeq" id="WP_004082981.1">
    <property type="nucleotide sequence ID" value="NZ_CP011107.1"/>
</dbReference>
<dbReference type="PDB" id="7CH3">
    <property type="method" value="X-ray"/>
    <property type="resolution" value="3.61 A"/>
    <property type="chains" value="A/B/C/D/E/F/G/H/I/J/K/L=1-496"/>
</dbReference>
<dbReference type="PDB" id="7CWV">
    <property type="method" value="X-ray"/>
    <property type="resolution" value="3.53 A"/>
    <property type="chains" value="A/B/C/D/E/F/G/H/I/J/K/L=1-496"/>
</dbReference>
<dbReference type="PDBsum" id="7CH3"/>
<dbReference type="PDBsum" id="7CWV"/>
<dbReference type="SMR" id="Q9WYB3"/>
<dbReference type="FunCoup" id="Q9WYB3">
    <property type="interactions" value="38"/>
</dbReference>
<dbReference type="STRING" id="243274.TM_0276"/>
<dbReference type="PaxDb" id="243274-THEMA_03345"/>
<dbReference type="EnsemblBacteria" id="AAD35365">
    <property type="protein sequence ID" value="AAD35365"/>
    <property type="gene ID" value="TM_0276"/>
</dbReference>
<dbReference type="KEGG" id="tma:TM0276"/>
<dbReference type="KEGG" id="tmi:THEMA_03345"/>
<dbReference type="KEGG" id="tmm:Tmari_0274"/>
<dbReference type="KEGG" id="tmw:THMA_0283"/>
<dbReference type="eggNOG" id="COG2160">
    <property type="taxonomic scope" value="Bacteria"/>
</dbReference>
<dbReference type="InParanoid" id="Q9WYB3"/>
<dbReference type="OrthoDB" id="9765600at2"/>
<dbReference type="BRENDA" id="5.3.1.4">
    <property type="organism ID" value="6331"/>
</dbReference>
<dbReference type="SABIO-RK" id="Q9WYB3"/>
<dbReference type="UniPathway" id="UPA00145">
    <property type="reaction ID" value="UER00565"/>
</dbReference>
<dbReference type="Proteomes" id="UP000008183">
    <property type="component" value="Chromosome"/>
</dbReference>
<dbReference type="GO" id="GO:0005829">
    <property type="term" value="C:cytosol"/>
    <property type="evidence" value="ECO:0000318"/>
    <property type="project" value="GO_Central"/>
</dbReference>
<dbReference type="GO" id="GO:0008733">
    <property type="term" value="F:L-arabinose isomerase activity"/>
    <property type="evidence" value="ECO:0000318"/>
    <property type="project" value="GO_Central"/>
</dbReference>
<dbReference type="GO" id="GO:0030145">
    <property type="term" value="F:manganese ion binding"/>
    <property type="evidence" value="ECO:0007669"/>
    <property type="project" value="UniProtKB-UniRule"/>
</dbReference>
<dbReference type="GO" id="GO:0019569">
    <property type="term" value="P:L-arabinose catabolic process to xylulose 5-phosphate"/>
    <property type="evidence" value="ECO:0000318"/>
    <property type="project" value="GO_Central"/>
</dbReference>
<dbReference type="CDD" id="cd03557">
    <property type="entry name" value="L-arabinose_isomerase"/>
    <property type="match status" value="1"/>
</dbReference>
<dbReference type="Gene3D" id="3.40.50.10940">
    <property type="match status" value="1"/>
</dbReference>
<dbReference type="HAMAP" id="MF_00519">
    <property type="entry name" value="Arabinose_Isome"/>
    <property type="match status" value="1"/>
</dbReference>
<dbReference type="InterPro" id="IPR024664">
    <property type="entry name" value="Ara_Isoase_C"/>
</dbReference>
<dbReference type="InterPro" id="IPR055390">
    <property type="entry name" value="AraA_central"/>
</dbReference>
<dbReference type="InterPro" id="IPR055389">
    <property type="entry name" value="AraA_N"/>
</dbReference>
<dbReference type="InterPro" id="IPR038583">
    <property type="entry name" value="AraA_N_sf"/>
</dbReference>
<dbReference type="InterPro" id="IPR004216">
    <property type="entry name" value="Fuc/Ara_isomerase_C"/>
</dbReference>
<dbReference type="InterPro" id="IPR009015">
    <property type="entry name" value="Fucose_isomerase_N/cen_sf"/>
</dbReference>
<dbReference type="InterPro" id="IPR003762">
    <property type="entry name" value="Lara_isomerase"/>
</dbReference>
<dbReference type="NCBIfam" id="NF002795">
    <property type="entry name" value="PRK02929.1"/>
    <property type="match status" value="1"/>
</dbReference>
<dbReference type="PANTHER" id="PTHR38464">
    <property type="entry name" value="L-ARABINOSE ISOMERASE"/>
    <property type="match status" value="1"/>
</dbReference>
<dbReference type="PANTHER" id="PTHR38464:SF1">
    <property type="entry name" value="L-ARABINOSE ISOMERASE"/>
    <property type="match status" value="1"/>
</dbReference>
<dbReference type="Pfam" id="PF24856">
    <property type="entry name" value="AraA_central"/>
    <property type="match status" value="1"/>
</dbReference>
<dbReference type="Pfam" id="PF02610">
    <property type="entry name" value="AraA_N"/>
    <property type="match status" value="1"/>
</dbReference>
<dbReference type="Pfam" id="PF11762">
    <property type="entry name" value="Arabinose_Iso_C"/>
    <property type="match status" value="1"/>
</dbReference>
<dbReference type="PIRSF" id="PIRSF001478">
    <property type="entry name" value="L-ara_isomerase"/>
    <property type="match status" value="1"/>
</dbReference>
<dbReference type="SUPFAM" id="SSF50443">
    <property type="entry name" value="FucI/AraA C-terminal domain-like"/>
    <property type="match status" value="1"/>
</dbReference>
<dbReference type="SUPFAM" id="SSF53743">
    <property type="entry name" value="FucI/AraA N-terminal and middle domains"/>
    <property type="match status" value="1"/>
</dbReference>
<reference key="1">
    <citation type="journal article" date="1999" name="Nature">
        <title>Evidence for lateral gene transfer between Archaea and Bacteria from genome sequence of Thermotoga maritima.</title>
        <authorList>
            <person name="Nelson K.E."/>
            <person name="Clayton R.A."/>
            <person name="Gill S.R."/>
            <person name="Gwinn M.L."/>
            <person name="Dodson R.J."/>
            <person name="Haft D.H."/>
            <person name="Hickey E.K."/>
            <person name="Peterson J.D."/>
            <person name="Nelson W.C."/>
            <person name="Ketchum K.A."/>
            <person name="McDonald L.A."/>
            <person name="Utterback T.R."/>
            <person name="Malek J.A."/>
            <person name="Linher K.D."/>
            <person name="Garrett M.M."/>
            <person name="Stewart A.M."/>
            <person name="Cotton M.D."/>
            <person name="Pratt M.S."/>
            <person name="Phillips C.A."/>
            <person name="Richardson D.L."/>
            <person name="Heidelberg J.F."/>
            <person name="Sutton G.G."/>
            <person name="Fleischmann R.D."/>
            <person name="Eisen J.A."/>
            <person name="White O."/>
            <person name="Salzberg S.L."/>
            <person name="Smith H.O."/>
            <person name="Venter J.C."/>
            <person name="Fraser C.M."/>
        </authorList>
    </citation>
    <scope>NUCLEOTIDE SEQUENCE [LARGE SCALE GENOMIC DNA]</scope>
    <source>
        <strain>ATCC 43589 / DSM 3109 / JCM 10099 / NBRC 100826 / MSB8</strain>
    </source>
</reference>
<gene>
    <name evidence="1" type="primary">araA</name>
    <name type="ordered locus">TM_0276</name>
</gene>
<accession>Q9WYB3</accession>
<comment type="function">
    <text evidence="1">Catalyzes the conversion of L-arabinose to L-ribulose.</text>
</comment>
<comment type="catalytic activity">
    <reaction evidence="1">
        <text>beta-L-arabinopyranose = L-ribulose</text>
        <dbReference type="Rhea" id="RHEA:14821"/>
        <dbReference type="ChEBI" id="CHEBI:16880"/>
        <dbReference type="ChEBI" id="CHEBI:40886"/>
        <dbReference type="EC" id="5.3.1.4"/>
    </reaction>
</comment>
<comment type="cofactor">
    <cofactor evidence="1">
        <name>Mn(2+)</name>
        <dbReference type="ChEBI" id="CHEBI:29035"/>
    </cofactor>
    <text evidence="1">Binds 1 Mn(2+) ion per subunit.</text>
</comment>
<comment type="pathway">
    <text evidence="1">Carbohydrate degradation; L-arabinose degradation via L-ribulose; D-xylulose 5-phosphate from L-arabinose (bacterial route): step 1/3.</text>
</comment>
<comment type="similarity">
    <text evidence="1">Belongs to the arabinose isomerase family.</text>
</comment>
<proteinExistence type="evidence at protein level"/>
<protein>
    <recommendedName>
        <fullName evidence="1">L-arabinose isomerase</fullName>
        <ecNumber evidence="1">5.3.1.4</ecNumber>
    </recommendedName>
</protein>
<keyword id="KW-0002">3D-structure</keyword>
<keyword id="KW-0054">Arabinose catabolism</keyword>
<keyword id="KW-0119">Carbohydrate metabolism</keyword>
<keyword id="KW-0413">Isomerase</keyword>
<keyword id="KW-0464">Manganese</keyword>
<keyword id="KW-0479">Metal-binding</keyword>
<keyword id="KW-1185">Reference proteome</keyword>
<evidence type="ECO:0000255" key="1">
    <source>
        <dbReference type="HAMAP-Rule" id="MF_00519"/>
    </source>
</evidence>
<organism>
    <name type="scientific">Thermotoga maritima (strain ATCC 43589 / DSM 3109 / JCM 10099 / NBRC 100826 / MSB8)</name>
    <dbReference type="NCBI Taxonomy" id="243274"/>
    <lineage>
        <taxon>Bacteria</taxon>
        <taxon>Thermotogati</taxon>
        <taxon>Thermotogota</taxon>
        <taxon>Thermotogae</taxon>
        <taxon>Thermotogales</taxon>
        <taxon>Thermotogaceae</taxon>
        <taxon>Thermotoga</taxon>
    </lineage>
</organism>
<name>ARAA_THEMA</name>